<comment type="function">
    <text evidence="4 7">FAD-dependent monooxygenase; part of the gene cluster that mediates the biosynthesis of the indole diterpenes penitrems (PubMed:26213965). The geranylgeranyl diphosphate (GGPP) synthase penG catalyzes the first step in penitrem biosynthesis via conversion of farnesyl pyrophosphate and isopentyl pyrophosphate into geranylgeranyl pyrophosphate (GGPP) (Probable). Condensation of indole-3-glycerol phosphate with GGPP by the prenyl transferase penC then forms 3-geranylgeranylindole (3-GGI) (Probable). Epoxidation by the FAD-dependent monooxygenase penM leads to a epoxidized-GGI that is substrate of the terpene cyclase penB for cyclization to yield paspaline (Probable). Paspaline is subsequently converted to 13-desoxypaxilline by the cytochrome P450 monooxygenase penP, the latter being then converted to paxilline by the cytochrome P450 monooxygenase penQ (PubMed:26213965). Paxilline is converted to beta-paxitriol via C-10 ketoreduction by the short-chain dehydrogenase PC-15 which can be monoprenylated at the C-20 by the indole diterpene prenyltransferase penD (Probable). A two-step elimination (acetylation and elimination) process performed by the O-acetyltransferase PC-16 and the P.simplicissimum ptmI-ortholog not yet identified in P.crustosum, leads to the production of the prenylated form of penijanthine (Probable). The FAD-linked oxidoreductase ptmO then converts the prenylated form of penijanthine into PC-M5 which is in turn transformed into PC-M4 by the aromatic dimethylallyltransferase PC-22 (Probable). A series of oxidation steps involving 4 cytochrome P450 monooxygenases (PC-21, PC-05, PC-23, PC-20) and a FAD-dependent monooxygenase (PC-14) are required for the transformation of PC-M4 to penitrems A and E. Synthesis of these final products is proposed to proceed via penitrems D and C (PC-21, PC-05, PC-14) and penitrems B and F (PC-21, PC-05, PC-14, PC-23) (Probable).</text>
</comment>
<comment type="cofactor">
    <cofactor evidence="1">
        <name>FAD</name>
        <dbReference type="ChEBI" id="CHEBI:57692"/>
    </cofactor>
</comment>
<comment type="pathway">
    <text evidence="7">Secondary metabolite biosynthesis.</text>
</comment>
<comment type="subcellular location">
    <subcellularLocation>
        <location evidence="3">Membrane</location>
        <topology evidence="3">Multi-pass membrane protein</topology>
    </subcellularLocation>
</comment>
<comment type="similarity">
    <text evidence="6">Belongs to the paxM FAD-dependent monooxygenase family.</text>
</comment>
<gene>
    <name evidence="5" type="primary">penM</name>
</gene>
<name>PENM_PENCR</name>
<dbReference type="EC" id="1.-.-.-" evidence="7"/>
<dbReference type="EMBL" id="KC963408">
    <property type="protein sequence ID" value="AGZ20191.1"/>
    <property type="molecule type" value="Genomic_DNA"/>
</dbReference>
<dbReference type="SMR" id="A0A0E3D8L6"/>
<dbReference type="GO" id="GO:0016020">
    <property type="term" value="C:membrane"/>
    <property type="evidence" value="ECO:0007669"/>
    <property type="project" value="UniProtKB-SubCell"/>
</dbReference>
<dbReference type="GO" id="GO:0071949">
    <property type="term" value="F:FAD binding"/>
    <property type="evidence" value="ECO:0007669"/>
    <property type="project" value="InterPro"/>
</dbReference>
<dbReference type="GO" id="GO:0004497">
    <property type="term" value="F:monooxygenase activity"/>
    <property type="evidence" value="ECO:0007669"/>
    <property type="project" value="UniProtKB-KW"/>
</dbReference>
<dbReference type="Gene3D" id="3.50.50.60">
    <property type="entry name" value="FAD/NAD(P)-binding domain"/>
    <property type="match status" value="1"/>
</dbReference>
<dbReference type="InterPro" id="IPR002938">
    <property type="entry name" value="FAD-bd"/>
</dbReference>
<dbReference type="InterPro" id="IPR036188">
    <property type="entry name" value="FAD/NAD-bd_sf"/>
</dbReference>
<dbReference type="InterPro" id="IPR050562">
    <property type="entry name" value="FAD_mOase_fung"/>
</dbReference>
<dbReference type="PANTHER" id="PTHR47356:SF2">
    <property type="entry name" value="FAD-BINDING DOMAIN-CONTAINING PROTEIN-RELATED"/>
    <property type="match status" value="1"/>
</dbReference>
<dbReference type="PANTHER" id="PTHR47356">
    <property type="entry name" value="FAD-DEPENDENT MONOOXYGENASE ASQG-RELATED"/>
    <property type="match status" value="1"/>
</dbReference>
<dbReference type="Pfam" id="PF01494">
    <property type="entry name" value="FAD_binding_3"/>
    <property type="match status" value="1"/>
</dbReference>
<dbReference type="PRINTS" id="PR00420">
    <property type="entry name" value="RNGMNOXGNASE"/>
</dbReference>
<dbReference type="SUPFAM" id="SSF51905">
    <property type="entry name" value="FAD/NAD(P)-binding domain"/>
    <property type="match status" value="1"/>
</dbReference>
<keyword id="KW-0274">FAD</keyword>
<keyword id="KW-0285">Flavoprotein</keyword>
<keyword id="KW-0472">Membrane</keyword>
<keyword id="KW-0503">Monooxygenase</keyword>
<keyword id="KW-0560">Oxidoreductase</keyword>
<keyword id="KW-0812">Transmembrane</keyword>
<keyword id="KW-1133">Transmembrane helix</keyword>
<feature type="chain" id="PRO_0000446564" description="FAD-dependent monooxygenase penM">
    <location>
        <begin position="1"/>
        <end position="465"/>
    </location>
</feature>
<feature type="transmembrane region" description="Helical" evidence="3">
    <location>
        <begin position="5"/>
        <end position="25"/>
    </location>
</feature>
<feature type="transmembrane region" description="Helical" evidence="3">
    <location>
        <begin position="435"/>
        <end position="455"/>
    </location>
</feature>
<feature type="binding site" evidence="2">
    <location>
        <position position="35"/>
    </location>
    <ligand>
        <name>FAD</name>
        <dbReference type="ChEBI" id="CHEBI:57692"/>
    </ligand>
</feature>
<feature type="binding site" evidence="2">
    <location>
        <position position="49"/>
    </location>
    <ligand>
        <name>FAD</name>
        <dbReference type="ChEBI" id="CHEBI:57692"/>
    </ligand>
</feature>
<feature type="binding site" evidence="2">
    <location>
        <position position="108"/>
    </location>
    <ligand>
        <name>FAD</name>
        <dbReference type="ChEBI" id="CHEBI:57692"/>
    </ligand>
</feature>
<feature type="binding site" evidence="2">
    <location>
        <position position="299"/>
    </location>
    <ligand>
        <name>FAD</name>
        <dbReference type="ChEBI" id="CHEBI:57692"/>
    </ligand>
</feature>
<feature type="binding site" evidence="2">
    <location>
        <position position="312"/>
    </location>
    <ligand>
        <name>FAD</name>
        <dbReference type="ChEBI" id="CHEBI:57692"/>
    </ligand>
</feature>
<protein>
    <recommendedName>
        <fullName evidence="5">FAD-dependent monooxygenase penM</fullName>
        <ecNumber evidence="7">1.-.-.-</ecNumber>
    </recommendedName>
    <alternativeName>
        <fullName evidence="5">Penitrem biosynthesis cluster protein M</fullName>
    </alternativeName>
</protein>
<organism>
    <name type="scientific">Penicillium crustosum</name>
    <name type="common">Blue mold fungus</name>
    <dbReference type="NCBI Taxonomy" id="36656"/>
    <lineage>
        <taxon>Eukaryota</taxon>
        <taxon>Fungi</taxon>
        <taxon>Dikarya</taxon>
        <taxon>Ascomycota</taxon>
        <taxon>Pezizomycotina</taxon>
        <taxon>Eurotiomycetes</taxon>
        <taxon>Eurotiomycetidae</taxon>
        <taxon>Eurotiales</taxon>
        <taxon>Aspergillaceae</taxon>
        <taxon>Penicillium</taxon>
    </lineage>
</organism>
<proteinExistence type="inferred from homology"/>
<reference key="1">
    <citation type="journal article" date="2015" name="Toxins">
        <title>Molecular cloning and functional analysis of gene clusters for the biosynthesis of indole-diterpenes in Penicillium crustosum and P. janthinellum.</title>
        <authorList>
            <person name="Nicholson M.J."/>
            <person name="Eaton C.J."/>
            <person name="Starkel C."/>
            <person name="Tapper B.A."/>
            <person name="Cox M.P."/>
            <person name="Scott B."/>
        </authorList>
    </citation>
    <scope>NUCLEOTIDE SEQUENCE [GENOMIC DNA]</scope>
    <scope>IDENTIFICATION</scope>
    <scope>FUNCTION</scope>
    <scope>PATHWAY</scope>
    <source>
        <strain>PN2402</strain>
    </source>
</reference>
<evidence type="ECO:0000250" key="1">
    <source>
        <dbReference type="UniProtKB" id="A6T923"/>
    </source>
</evidence>
<evidence type="ECO:0000250" key="2">
    <source>
        <dbReference type="UniProtKB" id="B8M9J8"/>
    </source>
</evidence>
<evidence type="ECO:0000255" key="3"/>
<evidence type="ECO:0000269" key="4">
    <source>
    </source>
</evidence>
<evidence type="ECO:0000303" key="5">
    <source>
    </source>
</evidence>
<evidence type="ECO:0000305" key="6"/>
<evidence type="ECO:0000305" key="7">
    <source>
    </source>
</evidence>
<sequence length="465" mass="52197">MDKDQFHVIIVGGSIAGLTLAHCLHRAGISHVVLEKASEPAPQIGASIGILPNGARVLDQLQLYETIEQYIEPLETATIGYPDGFRFSSSYPKLVNERFGFPIAFLDRQKLLEILYQHYPDKSRIRLAARVVSIESSSIDSTITMEDGTIYKGHLIVGADGVHSRVRAEMWKAAQRINPGMTVEYSCIFGISAPIKGLIVGEQVNAFFDHLTIVTIHGKKGRVYWFLIQKLDRKYVYPECPRFTAKEIGPIVNHLKEVKFFKDITFGQLWDSRETASMTALEENVFDTWYHGRMVLMGDSAHKMTPNIGQGANMAIEDAAVLSSLLSDLLQKQTQPPTNAQIEKLLAQYREVRHPRVNSIYKTSRFLVRFQARDGIFNTLFGRYYAPHAGDLPADMASKTIAGGELCAYLPSPSRCSYGWEKYKNSGLGRTVWCVLVLLLSALTWSCLGNMNIIMELPKRVSMMR</sequence>
<accession>A0A0E3D8L6</accession>